<sequence length="491" mass="55237">MANYFNTLTFIEKLKHLGKCRFMSNNEFSNGIQALLSKKVAIIGCGSQGLNQGLNMRDSGVNITYALRRESILNKQESWARATRNGFPVGTYDEIIPKSDVVINLTPDKCHTSVIRQIEPLMKHGSTLGYSHGFHIVEVGEKIRQDITVIMVAPKCPGTEVRQEYQRGFGVPALIAVHEENDTYDMGMTLAKSWAFALGSHRAGVLESSFVAEVKSDLMGEQTILCGMLQAGSILCFDYMISNGVNAAYAGKFIQCGWEVITEALKQGGITLMMDRLSNASKIRAFILSEKLKNILKPVFEKHMENILNGVFSKEMMLDWENNDSKLLKWREKTSQLPLEQAPNYQQEILEQTYFDYGILMVAIIKSGIELSFDTMIKSGIAPESAYYESLHELPLIANTIARKKLYEMNMVISDTAEYGNYLFCDKVVPLLKKTIIPNLRTGDLGMSPKNVNVDNIVLRNTNDMIRNHTIEKVGIQLRSYMQNMKSLSFN</sequence>
<accession>Q491Z2</accession>
<organism>
    <name type="scientific">Blochmanniella pennsylvanica (strain BPEN)</name>
    <dbReference type="NCBI Taxonomy" id="291272"/>
    <lineage>
        <taxon>Bacteria</taxon>
        <taxon>Pseudomonadati</taxon>
        <taxon>Pseudomonadota</taxon>
        <taxon>Gammaproteobacteria</taxon>
        <taxon>Enterobacterales</taxon>
        <taxon>Enterobacteriaceae</taxon>
        <taxon>ant endosymbionts</taxon>
        <taxon>Candidatus Blochmanniella</taxon>
    </lineage>
</organism>
<proteinExistence type="inferred from homology"/>
<reference key="1">
    <citation type="journal article" date="2005" name="Genome Res.">
        <title>Genome sequence of Blochmannia pennsylvanicus indicates parallel evolutionary trends among bacterial mutualists of insects.</title>
        <authorList>
            <person name="Degnan P.H."/>
            <person name="Lazarus A.B."/>
            <person name="Wernegreen J.J."/>
        </authorList>
    </citation>
    <scope>NUCLEOTIDE SEQUENCE [LARGE SCALE GENOMIC DNA]</scope>
    <source>
        <strain>BPEN</strain>
    </source>
</reference>
<name>ILVC_BLOPB</name>
<feature type="chain" id="PRO_1000190911" description="Ketol-acid reductoisomerase (NADP(+))">
    <location>
        <begin position="1"/>
        <end position="491"/>
    </location>
</feature>
<feature type="domain" description="KARI N-terminal Rossmann" evidence="2">
    <location>
        <begin position="14"/>
        <end position="208"/>
    </location>
</feature>
<feature type="domain" description="KARI C-terminal knotted 1" evidence="3">
    <location>
        <begin position="209"/>
        <end position="344"/>
    </location>
</feature>
<feature type="domain" description="KARI C-terminal knotted 2" evidence="3">
    <location>
        <begin position="345"/>
        <end position="485"/>
    </location>
</feature>
<feature type="active site" evidence="1">
    <location>
        <position position="132"/>
    </location>
</feature>
<feature type="binding site" evidence="1">
    <location>
        <begin position="45"/>
        <end position="48"/>
    </location>
    <ligand>
        <name>NADP(+)</name>
        <dbReference type="ChEBI" id="CHEBI:58349"/>
    </ligand>
</feature>
<feature type="binding site" evidence="1">
    <location>
        <position position="68"/>
    </location>
    <ligand>
        <name>NADP(+)</name>
        <dbReference type="ChEBI" id="CHEBI:58349"/>
    </ligand>
</feature>
<feature type="binding site" evidence="1">
    <location>
        <position position="78"/>
    </location>
    <ligand>
        <name>NADP(+)</name>
        <dbReference type="ChEBI" id="CHEBI:58349"/>
    </ligand>
</feature>
<feature type="binding site" evidence="1">
    <location>
        <position position="158"/>
    </location>
    <ligand>
        <name>NADP(+)</name>
        <dbReference type="ChEBI" id="CHEBI:58349"/>
    </ligand>
</feature>
<feature type="binding site" evidence="1">
    <location>
        <position position="217"/>
    </location>
    <ligand>
        <name>Mg(2+)</name>
        <dbReference type="ChEBI" id="CHEBI:18420"/>
        <label>1</label>
    </ligand>
</feature>
<feature type="binding site" evidence="1">
    <location>
        <position position="217"/>
    </location>
    <ligand>
        <name>Mg(2+)</name>
        <dbReference type="ChEBI" id="CHEBI:18420"/>
        <label>2</label>
    </ligand>
</feature>
<feature type="binding site" evidence="1">
    <location>
        <position position="221"/>
    </location>
    <ligand>
        <name>Mg(2+)</name>
        <dbReference type="ChEBI" id="CHEBI:18420"/>
        <label>1</label>
    </ligand>
</feature>
<feature type="binding site" evidence="1">
    <location>
        <position position="389"/>
    </location>
    <ligand>
        <name>Mg(2+)</name>
        <dbReference type="ChEBI" id="CHEBI:18420"/>
        <label>2</label>
    </ligand>
</feature>
<feature type="binding site" evidence="1">
    <location>
        <position position="393"/>
    </location>
    <ligand>
        <name>Mg(2+)</name>
        <dbReference type="ChEBI" id="CHEBI:18420"/>
        <label>2</label>
    </ligand>
</feature>
<feature type="binding site" evidence="1">
    <location>
        <position position="414"/>
    </location>
    <ligand>
        <name>substrate</name>
    </ligand>
</feature>
<comment type="function">
    <text evidence="1">Involved in the biosynthesis of branched-chain amino acids (BCAA). Catalyzes an alkyl-migration followed by a ketol-acid reduction of (S)-2-acetolactate (S2AL) to yield (R)-2,3-dihydroxy-isovalerate. In the isomerase reaction, S2AL is rearranged via a Mg-dependent methyl migration to produce 3-hydroxy-3-methyl-2-ketobutyrate (HMKB). In the reductase reaction, this 2-ketoacid undergoes a metal-dependent reduction by NADPH to yield (R)-2,3-dihydroxy-isovalerate.</text>
</comment>
<comment type="catalytic activity">
    <reaction evidence="1">
        <text>(2R)-2,3-dihydroxy-3-methylbutanoate + NADP(+) = (2S)-2-acetolactate + NADPH + H(+)</text>
        <dbReference type="Rhea" id="RHEA:22068"/>
        <dbReference type="ChEBI" id="CHEBI:15378"/>
        <dbReference type="ChEBI" id="CHEBI:49072"/>
        <dbReference type="ChEBI" id="CHEBI:57783"/>
        <dbReference type="ChEBI" id="CHEBI:58349"/>
        <dbReference type="ChEBI" id="CHEBI:58476"/>
        <dbReference type="EC" id="1.1.1.86"/>
    </reaction>
</comment>
<comment type="catalytic activity">
    <reaction evidence="1">
        <text>(2R,3R)-2,3-dihydroxy-3-methylpentanoate + NADP(+) = (S)-2-ethyl-2-hydroxy-3-oxobutanoate + NADPH + H(+)</text>
        <dbReference type="Rhea" id="RHEA:13493"/>
        <dbReference type="ChEBI" id="CHEBI:15378"/>
        <dbReference type="ChEBI" id="CHEBI:49256"/>
        <dbReference type="ChEBI" id="CHEBI:49258"/>
        <dbReference type="ChEBI" id="CHEBI:57783"/>
        <dbReference type="ChEBI" id="CHEBI:58349"/>
        <dbReference type="EC" id="1.1.1.86"/>
    </reaction>
</comment>
<comment type="cofactor">
    <cofactor evidence="1">
        <name>Mg(2+)</name>
        <dbReference type="ChEBI" id="CHEBI:18420"/>
    </cofactor>
    <text evidence="1">Binds 2 magnesium ions per subunit.</text>
</comment>
<comment type="pathway">
    <text evidence="1">Amino-acid biosynthesis; L-isoleucine biosynthesis; L-isoleucine from 2-oxobutanoate: step 2/4.</text>
</comment>
<comment type="pathway">
    <text evidence="1">Amino-acid biosynthesis; L-valine biosynthesis; L-valine from pyruvate: step 2/4.</text>
</comment>
<comment type="similarity">
    <text evidence="1">Belongs to the ketol-acid reductoisomerase family.</text>
</comment>
<gene>
    <name evidence="1" type="primary">ilvC</name>
    <name type="ordered locus">BPEN_609</name>
</gene>
<dbReference type="EC" id="1.1.1.86" evidence="1"/>
<dbReference type="EMBL" id="CP000016">
    <property type="protein sequence ID" value="AAZ41210.1"/>
    <property type="molecule type" value="Genomic_DNA"/>
</dbReference>
<dbReference type="RefSeq" id="WP_011283121.1">
    <property type="nucleotide sequence ID" value="NC_007292.1"/>
</dbReference>
<dbReference type="SMR" id="Q491Z2"/>
<dbReference type="STRING" id="291272.BPEN_609"/>
<dbReference type="KEGG" id="bpn:BPEN_609"/>
<dbReference type="eggNOG" id="COG0059">
    <property type="taxonomic scope" value="Bacteria"/>
</dbReference>
<dbReference type="HOGENOM" id="CLU_551905_0_0_6"/>
<dbReference type="OrthoDB" id="9804088at2"/>
<dbReference type="UniPathway" id="UPA00047">
    <property type="reaction ID" value="UER00056"/>
</dbReference>
<dbReference type="UniPathway" id="UPA00049">
    <property type="reaction ID" value="UER00060"/>
</dbReference>
<dbReference type="Proteomes" id="UP000007794">
    <property type="component" value="Chromosome"/>
</dbReference>
<dbReference type="GO" id="GO:0005829">
    <property type="term" value="C:cytosol"/>
    <property type="evidence" value="ECO:0007669"/>
    <property type="project" value="TreeGrafter"/>
</dbReference>
<dbReference type="GO" id="GO:0004455">
    <property type="term" value="F:ketol-acid reductoisomerase activity"/>
    <property type="evidence" value="ECO:0007669"/>
    <property type="project" value="UniProtKB-UniRule"/>
</dbReference>
<dbReference type="GO" id="GO:0000287">
    <property type="term" value="F:magnesium ion binding"/>
    <property type="evidence" value="ECO:0007669"/>
    <property type="project" value="UniProtKB-UniRule"/>
</dbReference>
<dbReference type="GO" id="GO:0009097">
    <property type="term" value="P:isoleucine biosynthetic process"/>
    <property type="evidence" value="ECO:0007669"/>
    <property type="project" value="UniProtKB-UniRule"/>
</dbReference>
<dbReference type="GO" id="GO:0009099">
    <property type="term" value="P:L-valine biosynthetic process"/>
    <property type="evidence" value="ECO:0007669"/>
    <property type="project" value="UniProtKB-UniRule"/>
</dbReference>
<dbReference type="Gene3D" id="1.10.1040.10">
    <property type="entry name" value="N-(1-d-carboxylethyl)-l-norvaline Dehydrogenase, domain 2"/>
    <property type="match status" value="1"/>
</dbReference>
<dbReference type="Gene3D" id="3.40.50.720">
    <property type="entry name" value="NAD(P)-binding Rossmann-like Domain"/>
    <property type="match status" value="1"/>
</dbReference>
<dbReference type="HAMAP" id="MF_00435">
    <property type="entry name" value="IlvC"/>
    <property type="match status" value="1"/>
</dbReference>
<dbReference type="InterPro" id="IPR008927">
    <property type="entry name" value="6-PGluconate_DH-like_C_sf"/>
</dbReference>
<dbReference type="InterPro" id="IPR013328">
    <property type="entry name" value="6PGD_dom2"/>
</dbReference>
<dbReference type="InterPro" id="IPR013023">
    <property type="entry name" value="KARI"/>
</dbReference>
<dbReference type="InterPro" id="IPR000506">
    <property type="entry name" value="KARI_C"/>
</dbReference>
<dbReference type="InterPro" id="IPR013116">
    <property type="entry name" value="KARI_N"/>
</dbReference>
<dbReference type="InterPro" id="IPR036291">
    <property type="entry name" value="NAD(P)-bd_dom_sf"/>
</dbReference>
<dbReference type="NCBIfam" id="TIGR00465">
    <property type="entry name" value="ilvC"/>
    <property type="match status" value="1"/>
</dbReference>
<dbReference type="NCBIfam" id="NF003557">
    <property type="entry name" value="PRK05225.1"/>
    <property type="match status" value="1"/>
</dbReference>
<dbReference type="PANTHER" id="PTHR21371">
    <property type="entry name" value="KETOL-ACID REDUCTOISOMERASE, MITOCHONDRIAL"/>
    <property type="match status" value="1"/>
</dbReference>
<dbReference type="PANTHER" id="PTHR21371:SF1">
    <property type="entry name" value="KETOL-ACID REDUCTOISOMERASE, MITOCHONDRIAL"/>
    <property type="match status" value="1"/>
</dbReference>
<dbReference type="Pfam" id="PF01450">
    <property type="entry name" value="KARI_C"/>
    <property type="match status" value="2"/>
</dbReference>
<dbReference type="Pfam" id="PF07991">
    <property type="entry name" value="KARI_N"/>
    <property type="match status" value="1"/>
</dbReference>
<dbReference type="SUPFAM" id="SSF48179">
    <property type="entry name" value="6-phosphogluconate dehydrogenase C-terminal domain-like"/>
    <property type="match status" value="2"/>
</dbReference>
<dbReference type="SUPFAM" id="SSF51735">
    <property type="entry name" value="NAD(P)-binding Rossmann-fold domains"/>
    <property type="match status" value="1"/>
</dbReference>
<dbReference type="PROSITE" id="PS51851">
    <property type="entry name" value="KARI_C"/>
    <property type="match status" value="2"/>
</dbReference>
<dbReference type="PROSITE" id="PS51850">
    <property type="entry name" value="KARI_N"/>
    <property type="match status" value="1"/>
</dbReference>
<keyword id="KW-0028">Amino-acid biosynthesis</keyword>
<keyword id="KW-0100">Branched-chain amino acid biosynthesis</keyword>
<keyword id="KW-0460">Magnesium</keyword>
<keyword id="KW-0479">Metal-binding</keyword>
<keyword id="KW-0521">NADP</keyword>
<keyword id="KW-0560">Oxidoreductase</keyword>
<keyword id="KW-1185">Reference proteome</keyword>
<keyword id="KW-0677">Repeat</keyword>
<protein>
    <recommendedName>
        <fullName evidence="1">Ketol-acid reductoisomerase (NADP(+))</fullName>
        <shortName evidence="1">KARI</shortName>
        <ecNumber evidence="1">1.1.1.86</ecNumber>
    </recommendedName>
    <alternativeName>
        <fullName evidence="1">Acetohydroxy-acid isomeroreductase</fullName>
        <shortName evidence="1">AHIR</shortName>
    </alternativeName>
    <alternativeName>
        <fullName evidence="1">Alpha-keto-beta-hydroxylacyl reductoisomerase</fullName>
    </alternativeName>
    <alternativeName>
        <fullName evidence="1">Ketol-acid reductoisomerase type 2</fullName>
    </alternativeName>
    <alternativeName>
        <fullName evidence="1">Ketol-acid reductoisomerase type II</fullName>
    </alternativeName>
</protein>
<evidence type="ECO:0000255" key="1">
    <source>
        <dbReference type="HAMAP-Rule" id="MF_00435"/>
    </source>
</evidence>
<evidence type="ECO:0000255" key="2">
    <source>
        <dbReference type="PROSITE-ProRule" id="PRU01197"/>
    </source>
</evidence>
<evidence type="ECO:0000255" key="3">
    <source>
        <dbReference type="PROSITE-ProRule" id="PRU01198"/>
    </source>
</evidence>